<accession>B7IHT2</accession>
<feature type="chain" id="PRO_1000190769" description="Thymidylate kinase">
    <location>
        <begin position="1"/>
        <end position="201"/>
    </location>
</feature>
<feature type="binding site" evidence="1">
    <location>
        <begin position="7"/>
        <end position="14"/>
    </location>
    <ligand>
        <name>ATP</name>
        <dbReference type="ChEBI" id="CHEBI:30616"/>
    </ligand>
</feature>
<name>KTHY_THEAB</name>
<comment type="function">
    <text evidence="1">Phosphorylation of dTMP to form dTDP in both de novo and salvage pathways of dTTP synthesis.</text>
</comment>
<comment type="catalytic activity">
    <reaction evidence="1">
        <text>dTMP + ATP = dTDP + ADP</text>
        <dbReference type="Rhea" id="RHEA:13517"/>
        <dbReference type="ChEBI" id="CHEBI:30616"/>
        <dbReference type="ChEBI" id="CHEBI:58369"/>
        <dbReference type="ChEBI" id="CHEBI:63528"/>
        <dbReference type="ChEBI" id="CHEBI:456216"/>
        <dbReference type="EC" id="2.7.4.9"/>
    </reaction>
</comment>
<comment type="similarity">
    <text evidence="1">Belongs to the thymidylate kinase family.</text>
</comment>
<evidence type="ECO:0000255" key="1">
    <source>
        <dbReference type="HAMAP-Rule" id="MF_00165"/>
    </source>
</evidence>
<organism>
    <name type="scientific">Thermosipho africanus (strain TCF52B)</name>
    <dbReference type="NCBI Taxonomy" id="484019"/>
    <lineage>
        <taxon>Bacteria</taxon>
        <taxon>Thermotogati</taxon>
        <taxon>Thermotogota</taxon>
        <taxon>Thermotogae</taxon>
        <taxon>Thermotogales</taxon>
        <taxon>Fervidobacteriaceae</taxon>
        <taxon>Thermosipho</taxon>
    </lineage>
</organism>
<proteinExistence type="inferred from homology"/>
<dbReference type="EC" id="2.7.4.9" evidence="1"/>
<dbReference type="EMBL" id="CP001185">
    <property type="protein sequence ID" value="ACJ75646.1"/>
    <property type="molecule type" value="Genomic_DNA"/>
</dbReference>
<dbReference type="RefSeq" id="WP_012580074.1">
    <property type="nucleotide sequence ID" value="NC_011653.1"/>
</dbReference>
<dbReference type="SMR" id="B7IHT2"/>
<dbReference type="STRING" id="484019.THA_1196"/>
<dbReference type="KEGG" id="taf:THA_1196"/>
<dbReference type="eggNOG" id="COG0125">
    <property type="taxonomic scope" value="Bacteria"/>
</dbReference>
<dbReference type="HOGENOM" id="CLU_049131_0_2_0"/>
<dbReference type="OrthoDB" id="9774907at2"/>
<dbReference type="Proteomes" id="UP000002453">
    <property type="component" value="Chromosome"/>
</dbReference>
<dbReference type="GO" id="GO:0005829">
    <property type="term" value="C:cytosol"/>
    <property type="evidence" value="ECO:0007669"/>
    <property type="project" value="TreeGrafter"/>
</dbReference>
<dbReference type="GO" id="GO:0005524">
    <property type="term" value="F:ATP binding"/>
    <property type="evidence" value="ECO:0007669"/>
    <property type="project" value="UniProtKB-UniRule"/>
</dbReference>
<dbReference type="GO" id="GO:0004798">
    <property type="term" value="F:dTMP kinase activity"/>
    <property type="evidence" value="ECO:0007669"/>
    <property type="project" value="UniProtKB-UniRule"/>
</dbReference>
<dbReference type="GO" id="GO:0006233">
    <property type="term" value="P:dTDP biosynthetic process"/>
    <property type="evidence" value="ECO:0007669"/>
    <property type="project" value="InterPro"/>
</dbReference>
<dbReference type="GO" id="GO:0006235">
    <property type="term" value="P:dTTP biosynthetic process"/>
    <property type="evidence" value="ECO:0007669"/>
    <property type="project" value="UniProtKB-UniRule"/>
</dbReference>
<dbReference type="GO" id="GO:0006227">
    <property type="term" value="P:dUDP biosynthetic process"/>
    <property type="evidence" value="ECO:0007669"/>
    <property type="project" value="TreeGrafter"/>
</dbReference>
<dbReference type="CDD" id="cd01672">
    <property type="entry name" value="TMPK"/>
    <property type="match status" value="1"/>
</dbReference>
<dbReference type="FunFam" id="3.40.50.300:FF:000225">
    <property type="entry name" value="Thymidylate kinase"/>
    <property type="match status" value="1"/>
</dbReference>
<dbReference type="Gene3D" id="3.40.50.300">
    <property type="entry name" value="P-loop containing nucleotide triphosphate hydrolases"/>
    <property type="match status" value="1"/>
</dbReference>
<dbReference type="HAMAP" id="MF_00165">
    <property type="entry name" value="Thymidylate_kinase"/>
    <property type="match status" value="1"/>
</dbReference>
<dbReference type="InterPro" id="IPR027417">
    <property type="entry name" value="P-loop_NTPase"/>
</dbReference>
<dbReference type="InterPro" id="IPR039430">
    <property type="entry name" value="Thymidylate_kin-like_dom"/>
</dbReference>
<dbReference type="InterPro" id="IPR018094">
    <property type="entry name" value="Thymidylate_kinase"/>
</dbReference>
<dbReference type="NCBIfam" id="TIGR00041">
    <property type="entry name" value="DTMP_kinase"/>
    <property type="match status" value="1"/>
</dbReference>
<dbReference type="PANTHER" id="PTHR10344">
    <property type="entry name" value="THYMIDYLATE KINASE"/>
    <property type="match status" value="1"/>
</dbReference>
<dbReference type="PANTHER" id="PTHR10344:SF4">
    <property type="entry name" value="UMP-CMP KINASE 2, MITOCHONDRIAL"/>
    <property type="match status" value="1"/>
</dbReference>
<dbReference type="Pfam" id="PF02223">
    <property type="entry name" value="Thymidylate_kin"/>
    <property type="match status" value="1"/>
</dbReference>
<dbReference type="SUPFAM" id="SSF52540">
    <property type="entry name" value="P-loop containing nucleoside triphosphate hydrolases"/>
    <property type="match status" value="1"/>
</dbReference>
<reference key="1">
    <citation type="journal article" date="2009" name="J. Bacteriol.">
        <title>The genome of Thermosipho africanus TCF52B: lateral genetic connections to the Firmicutes and Archaea.</title>
        <authorList>
            <person name="Nesboe C.L."/>
            <person name="Bapteste E."/>
            <person name="Curtis B."/>
            <person name="Dahle H."/>
            <person name="Lopez P."/>
            <person name="Macleod D."/>
            <person name="Dlutek M."/>
            <person name="Bowman S."/>
            <person name="Zhaxybayeva O."/>
            <person name="Birkeland N.-K."/>
            <person name="Doolittle W.F."/>
        </authorList>
    </citation>
    <scope>NUCLEOTIDE SEQUENCE [LARGE SCALE GENOMIC DNA]</scope>
    <source>
        <strain>TCF52B</strain>
    </source>
</reference>
<keyword id="KW-0067">ATP-binding</keyword>
<keyword id="KW-0418">Kinase</keyword>
<keyword id="KW-0545">Nucleotide biosynthesis</keyword>
<keyword id="KW-0547">Nucleotide-binding</keyword>
<keyword id="KW-1185">Reference proteome</keyword>
<keyword id="KW-0808">Transferase</keyword>
<gene>
    <name evidence="1" type="primary">tmk</name>
    <name type="ordered locus">THA_1196</name>
</gene>
<sequence length="201" mass="22840">MFIAFEGIDGSGKSTQLNLLSQYLKSKGKKVLNIREPGGTILGEKIREILLDNNLNINKRSELLLFLASRAQLVEEVIKPHLKRGFFVLADRFSDSSIAYQGGARNIGVETVSTLNDFATDNIYPDIVFYIDIPTKIAMERLKDKNLDRLEKEGQIFLEKVRNTYLKLSKLRDNFFIIDGTKSIDNVFAEIKSIVEKHLQS</sequence>
<protein>
    <recommendedName>
        <fullName evidence="1">Thymidylate kinase</fullName>
        <ecNumber evidence="1">2.7.4.9</ecNumber>
    </recommendedName>
    <alternativeName>
        <fullName evidence="1">dTMP kinase</fullName>
    </alternativeName>
</protein>